<name>RL23_NITMU</name>
<organism>
    <name type="scientific">Nitrosospira multiformis (strain ATCC 25196 / NCIMB 11849 / C 71)</name>
    <dbReference type="NCBI Taxonomy" id="323848"/>
    <lineage>
        <taxon>Bacteria</taxon>
        <taxon>Pseudomonadati</taxon>
        <taxon>Pseudomonadota</taxon>
        <taxon>Betaproteobacteria</taxon>
        <taxon>Nitrosomonadales</taxon>
        <taxon>Nitrosomonadaceae</taxon>
        <taxon>Nitrosospira</taxon>
    </lineage>
</organism>
<protein>
    <recommendedName>
        <fullName evidence="1">Large ribosomal subunit protein uL23</fullName>
    </recommendedName>
    <alternativeName>
        <fullName evidence="2">50S ribosomal protein L23</fullName>
    </alternativeName>
</protein>
<feature type="chain" id="PRO_0000272788" description="Large ribosomal subunit protein uL23">
    <location>
        <begin position="1"/>
        <end position="111"/>
    </location>
</feature>
<gene>
    <name evidence="1" type="primary">rplW</name>
    <name type="ordered locus">Nmul_A0769</name>
</gene>
<evidence type="ECO:0000255" key="1">
    <source>
        <dbReference type="HAMAP-Rule" id="MF_01369"/>
    </source>
</evidence>
<evidence type="ECO:0000305" key="2"/>
<comment type="function">
    <text evidence="1">One of the early assembly proteins it binds 23S rRNA. One of the proteins that surrounds the polypeptide exit tunnel on the outside of the ribosome. Forms the main docking site for trigger factor binding to the ribosome.</text>
</comment>
<comment type="subunit">
    <text evidence="1">Part of the 50S ribosomal subunit. Contacts protein L29, and trigger factor when it is bound to the ribosome.</text>
</comment>
<comment type="similarity">
    <text evidence="1">Belongs to the universal ribosomal protein uL23 family.</text>
</comment>
<proteinExistence type="inferred from homology"/>
<dbReference type="EMBL" id="CP000103">
    <property type="protein sequence ID" value="ABB74076.1"/>
    <property type="molecule type" value="Genomic_DNA"/>
</dbReference>
<dbReference type="RefSeq" id="WP_011380125.1">
    <property type="nucleotide sequence ID" value="NC_007614.1"/>
</dbReference>
<dbReference type="SMR" id="Q2YAZ5"/>
<dbReference type="STRING" id="323848.Nmul_A0769"/>
<dbReference type="KEGG" id="nmu:Nmul_A0769"/>
<dbReference type="eggNOG" id="COG0089">
    <property type="taxonomic scope" value="Bacteria"/>
</dbReference>
<dbReference type="HOGENOM" id="CLU_037562_3_1_4"/>
<dbReference type="OrthoDB" id="9793353at2"/>
<dbReference type="Proteomes" id="UP000002718">
    <property type="component" value="Chromosome"/>
</dbReference>
<dbReference type="GO" id="GO:1990904">
    <property type="term" value="C:ribonucleoprotein complex"/>
    <property type="evidence" value="ECO:0007669"/>
    <property type="project" value="UniProtKB-KW"/>
</dbReference>
<dbReference type="GO" id="GO:0005840">
    <property type="term" value="C:ribosome"/>
    <property type="evidence" value="ECO:0007669"/>
    <property type="project" value="UniProtKB-KW"/>
</dbReference>
<dbReference type="GO" id="GO:0019843">
    <property type="term" value="F:rRNA binding"/>
    <property type="evidence" value="ECO:0007669"/>
    <property type="project" value="UniProtKB-UniRule"/>
</dbReference>
<dbReference type="GO" id="GO:0003735">
    <property type="term" value="F:structural constituent of ribosome"/>
    <property type="evidence" value="ECO:0007669"/>
    <property type="project" value="InterPro"/>
</dbReference>
<dbReference type="GO" id="GO:0006412">
    <property type="term" value="P:translation"/>
    <property type="evidence" value="ECO:0007669"/>
    <property type="project" value="UniProtKB-UniRule"/>
</dbReference>
<dbReference type="FunFam" id="3.30.70.330:FF:000001">
    <property type="entry name" value="50S ribosomal protein L23"/>
    <property type="match status" value="1"/>
</dbReference>
<dbReference type="Gene3D" id="3.30.70.330">
    <property type="match status" value="1"/>
</dbReference>
<dbReference type="HAMAP" id="MF_01369_B">
    <property type="entry name" value="Ribosomal_uL23_B"/>
    <property type="match status" value="1"/>
</dbReference>
<dbReference type="InterPro" id="IPR012677">
    <property type="entry name" value="Nucleotide-bd_a/b_plait_sf"/>
</dbReference>
<dbReference type="InterPro" id="IPR013025">
    <property type="entry name" value="Ribosomal_uL23-like"/>
</dbReference>
<dbReference type="InterPro" id="IPR012678">
    <property type="entry name" value="Ribosomal_uL23/eL15/eS24_sf"/>
</dbReference>
<dbReference type="NCBIfam" id="NF004359">
    <property type="entry name" value="PRK05738.1-3"/>
    <property type="match status" value="1"/>
</dbReference>
<dbReference type="NCBIfam" id="NF004363">
    <property type="entry name" value="PRK05738.2-4"/>
    <property type="match status" value="1"/>
</dbReference>
<dbReference type="Pfam" id="PF00276">
    <property type="entry name" value="Ribosomal_L23"/>
    <property type="match status" value="1"/>
</dbReference>
<dbReference type="SUPFAM" id="SSF54189">
    <property type="entry name" value="Ribosomal proteins S24e, L23 and L15e"/>
    <property type="match status" value="1"/>
</dbReference>
<sequence>MSGQTFNPERLMQVILSPQISEKATFIGEKHNQIIFRVAPDATKPEVKAAVELIWKNQKVEVESVRISNVKGKEKRFGRFMGRRGGWKKAYISIKAGQEINFSEISQGEVK</sequence>
<accession>Q2YAZ5</accession>
<keyword id="KW-1185">Reference proteome</keyword>
<keyword id="KW-0687">Ribonucleoprotein</keyword>
<keyword id="KW-0689">Ribosomal protein</keyword>
<keyword id="KW-0694">RNA-binding</keyword>
<keyword id="KW-0699">rRNA-binding</keyword>
<reference key="1">
    <citation type="submission" date="2005-08" db="EMBL/GenBank/DDBJ databases">
        <title>Complete sequence of chromosome 1 of Nitrosospira multiformis ATCC 25196.</title>
        <authorList>
            <person name="Copeland A."/>
            <person name="Lucas S."/>
            <person name="Lapidus A."/>
            <person name="Barry K."/>
            <person name="Detter J.C."/>
            <person name="Glavina T."/>
            <person name="Hammon N."/>
            <person name="Israni S."/>
            <person name="Pitluck S."/>
            <person name="Chain P."/>
            <person name="Malfatti S."/>
            <person name="Shin M."/>
            <person name="Vergez L."/>
            <person name="Schmutz J."/>
            <person name="Larimer F."/>
            <person name="Land M."/>
            <person name="Hauser L."/>
            <person name="Kyrpides N."/>
            <person name="Lykidis A."/>
            <person name="Richardson P."/>
        </authorList>
    </citation>
    <scope>NUCLEOTIDE SEQUENCE [LARGE SCALE GENOMIC DNA]</scope>
    <source>
        <strain>ATCC 25196 / NCIMB 11849 / C 71</strain>
    </source>
</reference>